<protein>
    <recommendedName>
        <fullName>NAD kinase 2, mitochondrial</fullName>
        <ecNumber>2.7.1.23</ecNumber>
    </recommendedName>
    <alternativeName>
        <fullName>Mitochondrial NAD kinase</fullName>
    </alternativeName>
    <alternativeName>
        <fullName>NAD kinase domain-containing protein 1, mitochondrial</fullName>
    </alternativeName>
</protein>
<organism>
    <name type="scientific">Mus musculus</name>
    <name type="common">Mouse</name>
    <dbReference type="NCBI Taxonomy" id="10090"/>
    <lineage>
        <taxon>Eukaryota</taxon>
        <taxon>Metazoa</taxon>
        <taxon>Chordata</taxon>
        <taxon>Craniata</taxon>
        <taxon>Vertebrata</taxon>
        <taxon>Euteleostomi</taxon>
        <taxon>Mammalia</taxon>
        <taxon>Eutheria</taxon>
        <taxon>Euarchontoglires</taxon>
        <taxon>Glires</taxon>
        <taxon>Rodentia</taxon>
        <taxon>Myomorpha</taxon>
        <taxon>Muroidea</taxon>
        <taxon>Muridae</taxon>
        <taxon>Murinae</taxon>
        <taxon>Mus</taxon>
        <taxon>Mus</taxon>
    </lineage>
</organism>
<evidence type="ECO:0000250" key="1"/>
<evidence type="ECO:0000250" key="2">
    <source>
        <dbReference type="UniProtKB" id="Q4G0N4"/>
    </source>
</evidence>
<evidence type="ECO:0000255" key="3"/>
<evidence type="ECO:0000256" key="4">
    <source>
        <dbReference type="SAM" id="MobiDB-lite"/>
    </source>
</evidence>
<evidence type="ECO:0000303" key="5">
    <source>
    </source>
</evidence>
<evidence type="ECO:0000305" key="6"/>
<evidence type="ECO:0007744" key="7">
    <source>
    </source>
</evidence>
<evidence type="ECO:0007744" key="8">
    <source>
    </source>
</evidence>
<accession>Q8C5H8</accession>
<accession>Q3TRP5</accession>
<accession>Q3UEY1</accession>
<accession>Q9CTE4</accession>
<dbReference type="EC" id="2.7.1.23"/>
<dbReference type="EMBL" id="AK003858">
    <property type="protein sequence ID" value="BAB23041.1"/>
    <property type="status" value="ALT_FRAME"/>
    <property type="molecule type" value="mRNA"/>
</dbReference>
<dbReference type="EMBL" id="AK046666">
    <property type="status" value="NOT_ANNOTATED_CDS"/>
    <property type="molecule type" value="mRNA"/>
</dbReference>
<dbReference type="EMBL" id="AK078318">
    <property type="protein sequence ID" value="BAC37218.1"/>
    <property type="molecule type" value="mRNA"/>
</dbReference>
<dbReference type="EMBL" id="AK149267">
    <property type="protein sequence ID" value="BAE28780.1"/>
    <property type="status" value="ALT_INIT"/>
    <property type="molecule type" value="mRNA"/>
</dbReference>
<dbReference type="EMBL" id="AK162601">
    <property type="protein sequence ID" value="BAE36982.1"/>
    <property type="molecule type" value="mRNA"/>
</dbReference>
<dbReference type="RefSeq" id="NP_001035485.2">
    <molecule id="Q8C5H8-3"/>
    <property type="nucleotide sequence ID" value="NM_001040395.4"/>
</dbReference>
<dbReference type="RefSeq" id="NP_001078879.1">
    <molecule id="Q8C5H8-1"/>
    <property type="nucleotide sequence ID" value="NM_001085410.2"/>
</dbReference>
<dbReference type="RefSeq" id="NP_001273182.1">
    <molecule id="Q8C5H8-2"/>
    <property type="nucleotide sequence ID" value="NM_001286253.1"/>
</dbReference>
<dbReference type="RefSeq" id="NP_001273184.1">
    <molecule id="Q8C5H8-4"/>
    <property type="nucleotide sequence ID" value="NM_001286255.1"/>
</dbReference>
<dbReference type="SMR" id="Q8C5H8"/>
<dbReference type="BioGRID" id="212970">
    <property type="interactions" value="3"/>
</dbReference>
<dbReference type="FunCoup" id="Q8C5H8">
    <property type="interactions" value="3119"/>
</dbReference>
<dbReference type="STRING" id="10090.ENSMUSP00000068318"/>
<dbReference type="GlyGen" id="Q8C5H8">
    <property type="glycosylation" value="3 sites, 1 O-linked glycan (2 sites)"/>
</dbReference>
<dbReference type="iPTMnet" id="Q8C5H8"/>
<dbReference type="PhosphoSitePlus" id="Q8C5H8"/>
<dbReference type="SwissPalm" id="Q8C5H8"/>
<dbReference type="REPRODUCTION-2DPAGE" id="Q8C5H8"/>
<dbReference type="REPRODUCTION-2DPAGE" id="Q9CTE4"/>
<dbReference type="jPOST" id="Q8C5H8"/>
<dbReference type="PaxDb" id="10090-ENSMUSP00000068318"/>
<dbReference type="PeptideAtlas" id="Q8C5H8"/>
<dbReference type="ProteomicsDB" id="287347">
    <molecule id="Q8C5H8-1"/>
</dbReference>
<dbReference type="ProteomicsDB" id="287348">
    <molecule id="Q8C5H8-2"/>
</dbReference>
<dbReference type="ProteomicsDB" id="287349">
    <molecule id="Q8C5H8-3"/>
</dbReference>
<dbReference type="ProteomicsDB" id="287350">
    <molecule id="Q8C5H8-4"/>
</dbReference>
<dbReference type="Pumba" id="Q8C5H8"/>
<dbReference type="Antibodypedia" id="50834">
    <property type="antibodies" value="150 antibodies from 20 providers"/>
</dbReference>
<dbReference type="DNASU" id="68646"/>
<dbReference type="Ensembl" id="ENSMUST00000190591.10">
    <molecule id="Q8C5H8-1"/>
    <property type="protein sequence ID" value="ENSMUSP00000159405.2"/>
    <property type="gene ID" value="ENSMUSG00000022253.18"/>
</dbReference>
<dbReference type="GeneID" id="68646"/>
<dbReference type="KEGG" id="mmu:68646"/>
<dbReference type="UCSC" id="uc029sno.2">
    <molecule id="Q8C5H8-1"/>
    <property type="organism name" value="mouse"/>
</dbReference>
<dbReference type="UCSC" id="uc029snp.2">
    <molecule id="Q8C5H8-3"/>
    <property type="organism name" value="mouse"/>
</dbReference>
<dbReference type="UCSC" id="uc033gta.1">
    <molecule id="Q8C5H8-2"/>
    <property type="organism name" value="mouse"/>
</dbReference>
<dbReference type="UCSC" id="uc033gtb.1">
    <molecule id="Q8C5H8-4"/>
    <property type="organism name" value="mouse"/>
</dbReference>
<dbReference type="AGR" id="MGI:1915896"/>
<dbReference type="CTD" id="133686"/>
<dbReference type="MGI" id="MGI:1915896">
    <property type="gene designation" value="Nadk2"/>
</dbReference>
<dbReference type="VEuPathDB" id="HostDB:ENSMUSG00000022253"/>
<dbReference type="eggNOG" id="KOG4180">
    <property type="taxonomic scope" value="Eukaryota"/>
</dbReference>
<dbReference type="GeneTree" id="ENSGT00390000006320"/>
<dbReference type="InParanoid" id="Q8C5H8"/>
<dbReference type="OMA" id="WHFNINK"/>
<dbReference type="OrthoDB" id="185618at2759"/>
<dbReference type="PhylomeDB" id="Q8C5H8"/>
<dbReference type="TreeFam" id="TF314077"/>
<dbReference type="Reactome" id="R-MMU-196807">
    <property type="pathway name" value="Nicotinate metabolism"/>
</dbReference>
<dbReference type="Reactome" id="R-MMU-9837999">
    <property type="pathway name" value="Mitochondrial protein degradation"/>
</dbReference>
<dbReference type="BioGRID-ORCS" id="68646">
    <property type="hits" value="8 hits in 50 CRISPR screens"/>
</dbReference>
<dbReference type="ChiTaRS" id="Nadk2">
    <property type="organism name" value="mouse"/>
</dbReference>
<dbReference type="PRO" id="PR:Q8C5H8"/>
<dbReference type="Proteomes" id="UP000000589">
    <property type="component" value="Chromosome 15"/>
</dbReference>
<dbReference type="RNAct" id="Q8C5H8">
    <property type="molecule type" value="protein"/>
</dbReference>
<dbReference type="Bgee" id="ENSMUSG00000022253">
    <property type="expression patterns" value="Expressed in retinal neural layer and 228 other cell types or tissues"/>
</dbReference>
<dbReference type="ExpressionAtlas" id="Q8C5H8">
    <property type="expression patterns" value="baseline and differential"/>
</dbReference>
<dbReference type="GO" id="GO:0005759">
    <property type="term" value="C:mitochondrial matrix"/>
    <property type="evidence" value="ECO:0000315"/>
    <property type="project" value="MGI"/>
</dbReference>
<dbReference type="GO" id="GO:0005739">
    <property type="term" value="C:mitochondrion"/>
    <property type="evidence" value="ECO:0007005"/>
    <property type="project" value="MGI"/>
</dbReference>
<dbReference type="GO" id="GO:0005524">
    <property type="term" value="F:ATP binding"/>
    <property type="evidence" value="ECO:0007669"/>
    <property type="project" value="UniProtKB-KW"/>
</dbReference>
<dbReference type="GO" id="GO:0003951">
    <property type="term" value="F:NAD+ kinase activity"/>
    <property type="evidence" value="ECO:0000315"/>
    <property type="project" value="MGI"/>
</dbReference>
<dbReference type="GO" id="GO:0042803">
    <property type="term" value="F:protein homodimerization activity"/>
    <property type="evidence" value="ECO:0000250"/>
    <property type="project" value="UniProtKB"/>
</dbReference>
<dbReference type="GO" id="GO:0019674">
    <property type="term" value="P:NAD metabolic process"/>
    <property type="evidence" value="ECO:0000250"/>
    <property type="project" value="UniProtKB"/>
</dbReference>
<dbReference type="GO" id="GO:0006741">
    <property type="term" value="P:NADP biosynthetic process"/>
    <property type="evidence" value="ECO:0000315"/>
    <property type="project" value="MGI"/>
</dbReference>
<dbReference type="FunFam" id="3.40.50.10330:FF:000021">
    <property type="entry name" value="NAD kinase 2, mitochondrial"/>
    <property type="match status" value="1"/>
</dbReference>
<dbReference type="Gene3D" id="3.40.50.10330">
    <property type="entry name" value="Probable inorganic polyphosphate/atp-NAD kinase, domain 1"/>
    <property type="match status" value="1"/>
</dbReference>
<dbReference type="Gene3D" id="2.60.200.30">
    <property type="entry name" value="Probable inorganic polyphosphate/atp-NAD kinase, domain 2"/>
    <property type="match status" value="1"/>
</dbReference>
<dbReference type="InterPro" id="IPR017438">
    <property type="entry name" value="ATP-NAD_kinase_N"/>
</dbReference>
<dbReference type="InterPro" id="IPR017437">
    <property type="entry name" value="ATP-NAD_kinase_PpnK-typ_C"/>
</dbReference>
<dbReference type="InterPro" id="IPR016064">
    <property type="entry name" value="NAD/diacylglycerol_kinase_sf"/>
</dbReference>
<dbReference type="InterPro" id="IPR002504">
    <property type="entry name" value="NADK"/>
</dbReference>
<dbReference type="InterPro" id="IPR012355">
    <property type="entry name" value="NADK2_mit"/>
</dbReference>
<dbReference type="PANTHER" id="PTHR13158">
    <property type="match status" value="1"/>
</dbReference>
<dbReference type="PANTHER" id="PTHR13158:SF5">
    <property type="entry name" value="NAD KINASE 2, MITOCHONDRIAL"/>
    <property type="match status" value="1"/>
</dbReference>
<dbReference type="Pfam" id="PF01513">
    <property type="entry name" value="NAD_kinase"/>
    <property type="match status" value="1"/>
</dbReference>
<dbReference type="PIRSF" id="PIRSF017565">
    <property type="entry name" value="Kin_ATP-NAD_euk"/>
    <property type="match status" value="1"/>
</dbReference>
<dbReference type="SUPFAM" id="SSF111331">
    <property type="entry name" value="NAD kinase/diacylglycerol kinase-like"/>
    <property type="match status" value="1"/>
</dbReference>
<name>NADK2_MOUSE</name>
<proteinExistence type="evidence at protein level"/>
<keyword id="KW-0007">Acetylation</keyword>
<keyword id="KW-0025">Alternative splicing</keyword>
<keyword id="KW-0067">ATP-binding</keyword>
<keyword id="KW-0418">Kinase</keyword>
<keyword id="KW-0496">Mitochondrion</keyword>
<keyword id="KW-0520">NAD</keyword>
<keyword id="KW-0521">NADP</keyword>
<keyword id="KW-0547">Nucleotide-binding</keyword>
<keyword id="KW-0597">Phosphoprotein</keyword>
<keyword id="KW-1185">Reference proteome</keyword>
<keyword id="KW-0808">Transferase</keyword>
<keyword id="KW-0809">Transit peptide</keyword>
<gene>
    <name type="primary">Nadk2</name>
    <name type="synonym">Mnadk</name>
    <name type="synonym">Nadkd1</name>
</gene>
<sequence>MTCYRGFLLGSCRRVAGGRAALRGSGSGADGRRHLGHGQPRELAGGGSPADGGFRPSRVVVVAKTTRYEFEQQRYRYAELSEEDLKQLLALKGSSYSGLLERHHIHTKNVEHIIDSLRDEGIEVRLVKRREYDEETVRWADAVIAAGGDGTMLLAASKVLDRLKPVIGVNTDPERSEGHLCLPVRYTHSFPEALRRFSRGEFRWLWRQRIRLYLEGTGINPTPVDLHEQQLSLNQHSRAFNIERAHDERSEASGPQLLPVRALNEVFIGESLSSRMPYCWAVAVDNLRRDIPNLKGLASYYEISVDDGPWEKQKSSGLNLCTGTGSKAWSFNINRVAAQAVEDVLHIARRQGNLTLPLNKDLVEKVTNEYNESLLYSPEEPKILFSIREPIANRVFSSSRQRCFSSKVCVRSRCWDACMVVDGGTSFEFNDGAIASMMINKEDELRTVILEQ</sequence>
<reference key="1">
    <citation type="journal article" date="2005" name="Science">
        <title>The transcriptional landscape of the mammalian genome.</title>
        <authorList>
            <person name="Carninci P."/>
            <person name="Kasukawa T."/>
            <person name="Katayama S."/>
            <person name="Gough J."/>
            <person name="Frith M.C."/>
            <person name="Maeda N."/>
            <person name="Oyama R."/>
            <person name="Ravasi T."/>
            <person name="Lenhard B."/>
            <person name="Wells C."/>
            <person name="Kodzius R."/>
            <person name="Shimokawa K."/>
            <person name="Bajic V.B."/>
            <person name="Brenner S.E."/>
            <person name="Batalov S."/>
            <person name="Forrest A.R."/>
            <person name="Zavolan M."/>
            <person name="Davis M.J."/>
            <person name="Wilming L.G."/>
            <person name="Aidinis V."/>
            <person name="Allen J.E."/>
            <person name="Ambesi-Impiombato A."/>
            <person name="Apweiler R."/>
            <person name="Aturaliya R.N."/>
            <person name="Bailey T.L."/>
            <person name="Bansal M."/>
            <person name="Baxter L."/>
            <person name="Beisel K.W."/>
            <person name="Bersano T."/>
            <person name="Bono H."/>
            <person name="Chalk A.M."/>
            <person name="Chiu K.P."/>
            <person name="Choudhary V."/>
            <person name="Christoffels A."/>
            <person name="Clutterbuck D.R."/>
            <person name="Crowe M.L."/>
            <person name="Dalla E."/>
            <person name="Dalrymple B.P."/>
            <person name="de Bono B."/>
            <person name="Della Gatta G."/>
            <person name="di Bernardo D."/>
            <person name="Down T."/>
            <person name="Engstrom P."/>
            <person name="Fagiolini M."/>
            <person name="Faulkner G."/>
            <person name="Fletcher C.F."/>
            <person name="Fukushima T."/>
            <person name="Furuno M."/>
            <person name="Futaki S."/>
            <person name="Gariboldi M."/>
            <person name="Georgii-Hemming P."/>
            <person name="Gingeras T.R."/>
            <person name="Gojobori T."/>
            <person name="Green R.E."/>
            <person name="Gustincich S."/>
            <person name="Harbers M."/>
            <person name="Hayashi Y."/>
            <person name="Hensch T.K."/>
            <person name="Hirokawa N."/>
            <person name="Hill D."/>
            <person name="Huminiecki L."/>
            <person name="Iacono M."/>
            <person name="Ikeo K."/>
            <person name="Iwama A."/>
            <person name="Ishikawa T."/>
            <person name="Jakt M."/>
            <person name="Kanapin A."/>
            <person name="Katoh M."/>
            <person name="Kawasawa Y."/>
            <person name="Kelso J."/>
            <person name="Kitamura H."/>
            <person name="Kitano H."/>
            <person name="Kollias G."/>
            <person name="Krishnan S.P."/>
            <person name="Kruger A."/>
            <person name="Kummerfeld S.K."/>
            <person name="Kurochkin I.V."/>
            <person name="Lareau L.F."/>
            <person name="Lazarevic D."/>
            <person name="Lipovich L."/>
            <person name="Liu J."/>
            <person name="Liuni S."/>
            <person name="McWilliam S."/>
            <person name="Madan Babu M."/>
            <person name="Madera M."/>
            <person name="Marchionni L."/>
            <person name="Matsuda H."/>
            <person name="Matsuzawa S."/>
            <person name="Miki H."/>
            <person name="Mignone F."/>
            <person name="Miyake S."/>
            <person name="Morris K."/>
            <person name="Mottagui-Tabar S."/>
            <person name="Mulder N."/>
            <person name="Nakano N."/>
            <person name="Nakauchi H."/>
            <person name="Ng P."/>
            <person name="Nilsson R."/>
            <person name="Nishiguchi S."/>
            <person name="Nishikawa S."/>
            <person name="Nori F."/>
            <person name="Ohara O."/>
            <person name="Okazaki Y."/>
            <person name="Orlando V."/>
            <person name="Pang K.C."/>
            <person name="Pavan W.J."/>
            <person name="Pavesi G."/>
            <person name="Pesole G."/>
            <person name="Petrovsky N."/>
            <person name="Piazza S."/>
            <person name="Reed J."/>
            <person name="Reid J.F."/>
            <person name="Ring B.Z."/>
            <person name="Ringwald M."/>
            <person name="Rost B."/>
            <person name="Ruan Y."/>
            <person name="Salzberg S.L."/>
            <person name="Sandelin A."/>
            <person name="Schneider C."/>
            <person name="Schoenbach C."/>
            <person name="Sekiguchi K."/>
            <person name="Semple C.A."/>
            <person name="Seno S."/>
            <person name="Sessa L."/>
            <person name="Sheng Y."/>
            <person name="Shibata Y."/>
            <person name="Shimada H."/>
            <person name="Shimada K."/>
            <person name="Silva D."/>
            <person name="Sinclair B."/>
            <person name="Sperling S."/>
            <person name="Stupka E."/>
            <person name="Sugiura K."/>
            <person name="Sultana R."/>
            <person name="Takenaka Y."/>
            <person name="Taki K."/>
            <person name="Tammoja K."/>
            <person name="Tan S.L."/>
            <person name="Tang S."/>
            <person name="Taylor M.S."/>
            <person name="Tegner J."/>
            <person name="Teichmann S.A."/>
            <person name="Ueda H.R."/>
            <person name="van Nimwegen E."/>
            <person name="Verardo R."/>
            <person name="Wei C.L."/>
            <person name="Yagi K."/>
            <person name="Yamanishi H."/>
            <person name="Zabarovsky E."/>
            <person name="Zhu S."/>
            <person name="Zimmer A."/>
            <person name="Hide W."/>
            <person name="Bult C."/>
            <person name="Grimmond S.M."/>
            <person name="Teasdale R.D."/>
            <person name="Liu E.T."/>
            <person name="Brusic V."/>
            <person name="Quackenbush J."/>
            <person name="Wahlestedt C."/>
            <person name="Mattick J.S."/>
            <person name="Hume D.A."/>
            <person name="Kai C."/>
            <person name="Sasaki D."/>
            <person name="Tomaru Y."/>
            <person name="Fukuda S."/>
            <person name="Kanamori-Katayama M."/>
            <person name="Suzuki M."/>
            <person name="Aoki J."/>
            <person name="Arakawa T."/>
            <person name="Iida J."/>
            <person name="Imamura K."/>
            <person name="Itoh M."/>
            <person name="Kato T."/>
            <person name="Kawaji H."/>
            <person name="Kawagashira N."/>
            <person name="Kawashima T."/>
            <person name="Kojima M."/>
            <person name="Kondo S."/>
            <person name="Konno H."/>
            <person name="Nakano K."/>
            <person name="Ninomiya N."/>
            <person name="Nishio T."/>
            <person name="Okada M."/>
            <person name="Plessy C."/>
            <person name="Shibata K."/>
            <person name="Shiraki T."/>
            <person name="Suzuki S."/>
            <person name="Tagami M."/>
            <person name="Waki K."/>
            <person name="Watahiki A."/>
            <person name="Okamura-Oho Y."/>
            <person name="Suzuki H."/>
            <person name="Kawai J."/>
            <person name="Hayashizaki Y."/>
        </authorList>
    </citation>
    <scope>NUCLEOTIDE SEQUENCE [LARGE SCALE MRNA] (ISOFORM 1)</scope>
    <scope>NUCLEOTIDE SEQUENCE [LARGE SCALE MRNA] OF 63-452 (ISOFORM 2)</scope>
    <scope>NUCLEOTIDE SEQUENCE [LARGE SCALE MRNA] OF 63-452 (ISOFORM 3)</scope>
    <scope>NUCLEOTIDE SEQUENCE [LARGE SCALE MRNA] OF 61-452 (ISOFORM 4)</scope>
    <source>
        <strain>C57BL/6J</strain>
        <tissue>Adipose tissue</tissue>
        <tissue>Cerebellum</tissue>
        <tissue>Embryo</tissue>
        <tissue>Olfactory bulb</tissue>
        <tissue>Retina</tissue>
    </source>
</reference>
<reference key="2">
    <citation type="journal article" date="2010" name="Cell">
        <title>A tissue-specific atlas of mouse protein phosphorylation and expression.</title>
        <authorList>
            <person name="Huttlin E.L."/>
            <person name="Jedrychowski M.P."/>
            <person name="Elias J.E."/>
            <person name="Goswami T."/>
            <person name="Rad R."/>
            <person name="Beausoleil S.A."/>
            <person name="Villen J."/>
            <person name="Haas W."/>
            <person name="Sowa M.E."/>
            <person name="Gygi S.P."/>
        </authorList>
    </citation>
    <scope>IDENTIFICATION BY MASS SPECTROMETRY [LARGE SCALE ANALYSIS]</scope>
    <source>
        <tissue>Brain</tissue>
        <tissue>Brown adipose tissue</tissue>
        <tissue>Heart</tissue>
        <tissue>Kidney</tissue>
        <tissue>Liver</tissue>
        <tissue>Lung</tissue>
        <tissue>Pancreas</tissue>
        <tissue>Spleen</tissue>
        <tissue>Testis</tissue>
    </source>
</reference>
<reference key="3">
    <citation type="journal article" date="2013" name="Mol. Cell">
        <title>SIRT5-mediated lysine desuccinylation impacts diverse metabolic pathways.</title>
        <authorList>
            <person name="Park J."/>
            <person name="Chen Y."/>
            <person name="Tishkoff D.X."/>
            <person name="Peng C."/>
            <person name="Tan M."/>
            <person name="Dai L."/>
            <person name="Xie Z."/>
            <person name="Zhang Y."/>
            <person name="Zwaans B.M."/>
            <person name="Skinner M.E."/>
            <person name="Lombard D.B."/>
            <person name="Zhao Y."/>
        </authorList>
    </citation>
    <scope>SUCCINYLATION [LARGE SCALE ANALYSIS] AT LYS-64; LYS-312 AND LYS-327</scope>
    <scope>IDENTIFICATION BY MASS SPECTROMETRY [LARGE SCALE ANALYSIS]</scope>
    <source>
        <tissue>Liver</tissue>
    </source>
</reference>
<reference key="4">
    <citation type="journal article" date="2013" name="Proc. Natl. Acad. Sci. U.S.A.">
        <title>Label-free quantitative proteomics of the lysine acetylome in mitochondria identifies substrates of SIRT3 in metabolic pathways.</title>
        <authorList>
            <person name="Rardin M.J."/>
            <person name="Newman J.C."/>
            <person name="Held J.M."/>
            <person name="Cusack M.P."/>
            <person name="Sorensen D.J."/>
            <person name="Li B."/>
            <person name="Schilling B."/>
            <person name="Mooney S.D."/>
            <person name="Kahn C.R."/>
            <person name="Verdin E."/>
            <person name="Gibson B.W."/>
        </authorList>
    </citation>
    <scope>ACETYLATION [LARGE SCALE ANALYSIS] AT LYS-64; LYS-327 AND LYS-407</scope>
    <scope>IDENTIFICATION BY MASS SPECTROMETRY [LARGE SCALE ANALYSIS]</scope>
    <source>
        <tissue>Liver</tissue>
    </source>
</reference>
<comment type="function">
    <text evidence="1">Mitochondrial NAD(+) kinase that phosphorylates NAD(+) to yield NADP(+). Can use both ATP or inorganic polyphosphate as the phosphoryl donor (By similarity).</text>
</comment>
<comment type="catalytic activity">
    <reaction>
        <text>NAD(+) + ATP = ADP + NADP(+) + H(+)</text>
        <dbReference type="Rhea" id="RHEA:18629"/>
        <dbReference type="ChEBI" id="CHEBI:15378"/>
        <dbReference type="ChEBI" id="CHEBI:30616"/>
        <dbReference type="ChEBI" id="CHEBI:57540"/>
        <dbReference type="ChEBI" id="CHEBI:58349"/>
        <dbReference type="ChEBI" id="CHEBI:456216"/>
        <dbReference type="EC" id="2.7.1.23"/>
    </reaction>
</comment>
<comment type="activity regulation">
    <text evidence="1">Inhibited by NADH, NADPH and NADP(+).</text>
</comment>
<comment type="subunit">
    <text evidence="1">Homodimer.</text>
</comment>
<comment type="subcellular location">
    <subcellularLocation>
        <location evidence="1">Mitochondrion</location>
    </subcellularLocation>
</comment>
<comment type="alternative products">
    <event type="alternative splicing"/>
    <isoform>
        <id>Q8C5H8-1</id>
        <name>1</name>
        <sequence type="displayed"/>
    </isoform>
    <isoform>
        <id>Q8C5H8-2</id>
        <name>2</name>
        <sequence type="described" ref="VSP_027195 VSP_027196"/>
    </isoform>
    <isoform>
        <id>Q8C5H8-3</id>
        <name>3</name>
        <sequence type="described" ref="VSP_027195"/>
    </isoform>
    <isoform>
        <id>Q8C5H8-4</id>
        <name>4</name>
        <sequence type="described" ref="VSP_027194 VSP_027195"/>
    </isoform>
</comment>
<comment type="similarity">
    <text evidence="6">Belongs to the NAD kinase family.</text>
</comment>
<comment type="sequence caution" evidence="6">
    <conflict type="frameshift">
        <sequence resource="EMBL-CDS" id="BAB23041"/>
    </conflict>
</comment>
<comment type="sequence caution" evidence="6">
    <conflict type="erroneous initiation">
        <sequence resource="EMBL-CDS" id="BAE28780"/>
    </conflict>
    <text>Truncated N-terminus.</text>
</comment>
<feature type="transit peptide" description="Mitochondrion" evidence="3">
    <location>
        <begin position="1"/>
        <end position="50"/>
    </location>
</feature>
<feature type="chain" id="PRO_0000296293" description="NAD kinase 2, mitochondrial">
    <location>
        <begin position="51"/>
        <end position="452"/>
    </location>
</feature>
<feature type="region of interest" description="Disordered" evidence="4">
    <location>
        <begin position="23"/>
        <end position="52"/>
    </location>
</feature>
<feature type="modified residue" description="N6-acetyllysine; alternate" evidence="7">
    <location>
        <position position="64"/>
    </location>
</feature>
<feature type="modified residue" description="N6-succinyllysine; alternate" evidence="8">
    <location>
        <position position="64"/>
    </location>
</feature>
<feature type="modified residue" description="Phosphoserine" evidence="2">
    <location>
        <position position="176"/>
    </location>
</feature>
<feature type="modified residue" description="N6-succinyllysine" evidence="8">
    <location>
        <position position="312"/>
    </location>
</feature>
<feature type="modified residue" description="N6-acetyllysine; alternate" evidence="7">
    <location>
        <position position="327"/>
    </location>
</feature>
<feature type="modified residue" description="N6-succinyllysine; alternate" evidence="8">
    <location>
        <position position="327"/>
    </location>
</feature>
<feature type="modified residue" description="Phosphoserine" evidence="2">
    <location>
        <position position="377"/>
    </location>
</feature>
<feature type="modified residue" description="N6-acetyllysine" evidence="7">
    <location>
        <position position="407"/>
    </location>
</feature>
<feature type="splice variant" id="VSP_027194" description="In isoform 4." evidence="5">
    <location>
        <begin position="175"/>
        <end position="202"/>
    </location>
</feature>
<feature type="splice variant" id="VSP_027195" description="In isoform 2, isoform 3 and isoform 4." evidence="5">
    <location>
        <begin position="276"/>
        <end position="297"/>
    </location>
</feature>
<feature type="splice variant" id="VSP_027196" description="In isoform 2." evidence="5">
    <location>
        <begin position="408"/>
        <end position="452"/>
    </location>
</feature>
<feature type="sequence conflict" description="In Ref. 1; BAB23041." evidence="6" ref="1">
    <original>V</original>
    <variation>G</variation>
    <location>
        <position position="62"/>
    </location>
</feature>
<feature type="sequence conflict" description="In Ref. 1; BAB23041." evidence="6" ref="1">
    <original>S</original>
    <variation>P</variation>
    <location>
        <position position="81"/>
    </location>
</feature>
<feature type="sequence conflict" description="In Ref. 1; BAB23041." evidence="6" ref="1">
    <original>R</original>
    <variation>S</variation>
    <location>
        <position position="207"/>
    </location>
</feature>